<comment type="function">
    <text evidence="1">Binds 16S rRNA, required for the assembly of 30S particles.</text>
</comment>
<comment type="subunit">
    <text evidence="1">Part of the 30S ribosomal subunit.</text>
</comment>
<comment type="subcellular location">
    <subcellularLocation>
        <location>Plastid</location>
        <location>Chloroplast</location>
    </subcellularLocation>
</comment>
<comment type="similarity">
    <text evidence="1">Belongs to the universal ribosomal protein uS14 family.</text>
</comment>
<name>RR14_OENPA</name>
<dbReference type="EMBL" id="EU262891">
    <property type="protein sequence ID" value="ABX10114.1"/>
    <property type="molecule type" value="Genomic_DNA"/>
</dbReference>
<dbReference type="RefSeq" id="YP_001687444.1">
    <property type="nucleotide sequence ID" value="NC_010362.1"/>
</dbReference>
<dbReference type="SMR" id="B0Z5C1"/>
<dbReference type="GeneID" id="5955431"/>
<dbReference type="GO" id="GO:0009507">
    <property type="term" value="C:chloroplast"/>
    <property type="evidence" value="ECO:0007669"/>
    <property type="project" value="UniProtKB-SubCell"/>
</dbReference>
<dbReference type="GO" id="GO:0015935">
    <property type="term" value="C:small ribosomal subunit"/>
    <property type="evidence" value="ECO:0007669"/>
    <property type="project" value="TreeGrafter"/>
</dbReference>
<dbReference type="GO" id="GO:0019843">
    <property type="term" value="F:rRNA binding"/>
    <property type="evidence" value="ECO:0007669"/>
    <property type="project" value="UniProtKB-UniRule"/>
</dbReference>
<dbReference type="GO" id="GO:0003735">
    <property type="term" value="F:structural constituent of ribosome"/>
    <property type="evidence" value="ECO:0007669"/>
    <property type="project" value="InterPro"/>
</dbReference>
<dbReference type="GO" id="GO:0006412">
    <property type="term" value="P:translation"/>
    <property type="evidence" value="ECO:0007669"/>
    <property type="project" value="UniProtKB-UniRule"/>
</dbReference>
<dbReference type="FunFam" id="1.10.287.1480:FF:000001">
    <property type="entry name" value="30S ribosomal protein S14"/>
    <property type="match status" value="1"/>
</dbReference>
<dbReference type="Gene3D" id="1.10.287.1480">
    <property type="match status" value="1"/>
</dbReference>
<dbReference type="HAMAP" id="MF_00537">
    <property type="entry name" value="Ribosomal_uS14_1"/>
    <property type="match status" value="1"/>
</dbReference>
<dbReference type="InterPro" id="IPR001209">
    <property type="entry name" value="Ribosomal_uS14"/>
</dbReference>
<dbReference type="InterPro" id="IPR023036">
    <property type="entry name" value="Ribosomal_uS14_bac/plastid"/>
</dbReference>
<dbReference type="InterPro" id="IPR018271">
    <property type="entry name" value="Ribosomal_uS14_CS"/>
</dbReference>
<dbReference type="NCBIfam" id="NF006477">
    <property type="entry name" value="PRK08881.1"/>
    <property type="match status" value="1"/>
</dbReference>
<dbReference type="PANTHER" id="PTHR19836">
    <property type="entry name" value="30S RIBOSOMAL PROTEIN S14"/>
    <property type="match status" value="1"/>
</dbReference>
<dbReference type="PANTHER" id="PTHR19836:SF19">
    <property type="entry name" value="SMALL RIBOSOMAL SUBUNIT PROTEIN US14M"/>
    <property type="match status" value="1"/>
</dbReference>
<dbReference type="Pfam" id="PF00253">
    <property type="entry name" value="Ribosomal_S14"/>
    <property type="match status" value="1"/>
</dbReference>
<dbReference type="SUPFAM" id="SSF57716">
    <property type="entry name" value="Glucocorticoid receptor-like (DNA-binding domain)"/>
    <property type="match status" value="1"/>
</dbReference>
<dbReference type="PROSITE" id="PS00527">
    <property type="entry name" value="RIBOSOMAL_S14"/>
    <property type="match status" value="1"/>
</dbReference>
<geneLocation type="chloroplast"/>
<reference key="1">
    <citation type="journal article" date="2008" name="Nucleic Acids Res.">
        <title>The complete nucleotide sequences of the five genetically distinct plastid genomes of Oenothera, subsection Oenothera: I. Sequence evaluation and plastome evolution.</title>
        <authorList>
            <person name="Greiner S."/>
            <person name="Wang X."/>
            <person name="Rauwolf U."/>
            <person name="Silber M.V."/>
            <person name="Mayer K."/>
            <person name="Meurer J."/>
            <person name="Haberer G."/>
            <person name="Herrmann R.G."/>
        </authorList>
    </citation>
    <scope>NUCLEOTIDE SEQUENCE [LARGE SCALE GENOMIC DNA]</scope>
    <source>
        <strain>cv. Atrovirens</strain>
    </source>
</reference>
<evidence type="ECO:0000255" key="1">
    <source>
        <dbReference type="HAMAP-Rule" id="MF_00537"/>
    </source>
</evidence>
<evidence type="ECO:0000305" key="2"/>
<accession>B0Z5C1</accession>
<sequence>MARKGLIQREKKREKLEQKYRLIRRSSKKEISTAPSLSEKWKIHGKLQSSPRNSAPTRLHRRCFSTGRPRANYRDFRLSGHILREMVHACLLPGATRSSW</sequence>
<protein>
    <recommendedName>
        <fullName evidence="1">Small ribosomal subunit protein uS14c</fullName>
    </recommendedName>
    <alternativeName>
        <fullName evidence="2">30S ribosomal protein S14, chloroplastic</fullName>
    </alternativeName>
</protein>
<feature type="chain" id="PRO_0000354433" description="Small ribosomal subunit protein uS14c">
    <location>
        <begin position="1"/>
        <end position="100"/>
    </location>
</feature>
<keyword id="KW-0150">Chloroplast</keyword>
<keyword id="KW-0934">Plastid</keyword>
<keyword id="KW-0687">Ribonucleoprotein</keyword>
<keyword id="KW-0689">Ribosomal protein</keyword>
<keyword id="KW-0694">RNA-binding</keyword>
<keyword id="KW-0699">rRNA-binding</keyword>
<organism>
    <name type="scientific">Oenothera parviflora</name>
    <name type="common">Small-flowered evening primrose</name>
    <name type="synonym">Oenothera cruciata</name>
    <dbReference type="NCBI Taxonomy" id="482429"/>
    <lineage>
        <taxon>Eukaryota</taxon>
        <taxon>Viridiplantae</taxon>
        <taxon>Streptophyta</taxon>
        <taxon>Embryophyta</taxon>
        <taxon>Tracheophyta</taxon>
        <taxon>Spermatophyta</taxon>
        <taxon>Magnoliopsida</taxon>
        <taxon>eudicotyledons</taxon>
        <taxon>Gunneridae</taxon>
        <taxon>Pentapetalae</taxon>
        <taxon>rosids</taxon>
        <taxon>malvids</taxon>
        <taxon>Myrtales</taxon>
        <taxon>Onagraceae</taxon>
        <taxon>Onagroideae</taxon>
        <taxon>Onagreae</taxon>
        <taxon>Oenothera</taxon>
    </lineage>
</organism>
<proteinExistence type="inferred from homology"/>
<gene>
    <name evidence="1" type="primary">rps14</name>
</gene>